<gene>
    <name type="primary">Cysltr2</name>
    <name type="synonym">Cyslt2</name>
</gene>
<sequence>MEVTGTPSSYSNRNCTIENFKKEFYPIIYLIIFFWGALGNGFSIYVFLQTCKKSTSVNVFMLNLATSDFLFISTLPFRADYYFRGSNWIFGDLACRVMSYSLYVNMYTSIYFLTVLSVVRFLATVHPFRMFHVTSVRSAWILCGIIWVFIMASSALLLVNGQEEKDNIISCLELSPQKFKSLLIMNHIAVAVGFLLPFLTLTVCYLLIIRILLKAEIPESGPRAAHRKALTTIVIAMITFLLCFLPYHALRTLHLVTWDKDSCGDVLHKATVITLTMAAANSCFNPFLYYFAGENFKARLRAIFSKVHL</sequence>
<accession>Q920A1</accession>
<accession>A2RT90</accession>
<feature type="chain" id="PRO_0000069304" description="Cysteinyl leukotriene receptor 2">
    <location>
        <begin position="1"/>
        <end position="309"/>
    </location>
</feature>
<feature type="topological domain" description="Extracellular" evidence="1">
    <location>
        <begin position="1"/>
        <end position="26"/>
    </location>
</feature>
<feature type="transmembrane region" description="Helical; Name=1" evidence="1">
    <location>
        <begin position="27"/>
        <end position="47"/>
    </location>
</feature>
<feature type="topological domain" description="Cytoplasmic" evidence="1">
    <location>
        <begin position="48"/>
        <end position="56"/>
    </location>
</feature>
<feature type="transmembrane region" description="Helical; Name=2" evidence="1">
    <location>
        <begin position="57"/>
        <end position="77"/>
    </location>
</feature>
<feature type="topological domain" description="Extracellular" evidence="1">
    <location>
        <begin position="78"/>
        <end position="98"/>
    </location>
</feature>
<feature type="transmembrane region" description="Helical; Name=3" evidence="1">
    <location>
        <begin position="99"/>
        <end position="119"/>
    </location>
</feature>
<feature type="topological domain" description="Cytoplasmic" evidence="1">
    <location>
        <begin position="120"/>
        <end position="138"/>
    </location>
</feature>
<feature type="transmembrane region" description="Helical; Name=4" evidence="1">
    <location>
        <begin position="139"/>
        <end position="159"/>
    </location>
</feature>
<feature type="topological domain" description="Extracellular" evidence="1">
    <location>
        <begin position="160"/>
        <end position="187"/>
    </location>
</feature>
<feature type="transmembrane region" description="Helical; Name=5" evidence="1">
    <location>
        <begin position="188"/>
        <end position="208"/>
    </location>
</feature>
<feature type="topological domain" description="Cytoplasmic" evidence="1">
    <location>
        <begin position="209"/>
        <end position="229"/>
    </location>
</feature>
<feature type="transmembrane region" description="Helical; Name=6" evidence="1">
    <location>
        <begin position="230"/>
        <end position="250"/>
    </location>
</feature>
<feature type="topological domain" description="Extracellular" evidence="1">
    <location>
        <begin position="251"/>
        <end position="271"/>
    </location>
</feature>
<feature type="transmembrane region" description="Helical; Name=7" evidence="1">
    <location>
        <begin position="272"/>
        <end position="292"/>
    </location>
</feature>
<feature type="topological domain" description="Cytoplasmic" evidence="1">
    <location>
        <begin position="293"/>
        <end position="309"/>
    </location>
</feature>
<feature type="glycosylation site" description="N-linked (GlcNAc...) asparagine" evidence="1">
    <location>
        <position position="14"/>
    </location>
</feature>
<feature type="disulfide bond" evidence="2">
    <location>
        <begin position="95"/>
        <end position="171"/>
    </location>
</feature>
<feature type="sequence conflict" description="In Ref. 1; AAK97354." evidence="3" ref="1">
    <original>L</original>
    <variation>Q</variation>
    <location>
        <position position="122"/>
    </location>
</feature>
<protein>
    <recommendedName>
        <fullName>Cysteinyl leukotriene receptor 2</fullName>
        <shortName>CysLTR2</shortName>
    </recommendedName>
</protein>
<proteinExistence type="evidence at transcript level"/>
<organism>
    <name type="scientific">Mus musculus</name>
    <name type="common">Mouse</name>
    <dbReference type="NCBI Taxonomy" id="10090"/>
    <lineage>
        <taxon>Eukaryota</taxon>
        <taxon>Metazoa</taxon>
        <taxon>Chordata</taxon>
        <taxon>Craniata</taxon>
        <taxon>Vertebrata</taxon>
        <taxon>Euteleostomi</taxon>
        <taxon>Mammalia</taxon>
        <taxon>Eutheria</taxon>
        <taxon>Euarchontoglires</taxon>
        <taxon>Glires</taxon>
        <taxon>Rodentia</taxon>
        <taxon>Myomorpha</taxon>
        <taxon>Muroidea</taxon>
        <taxon>Muridae</taxon>
        <taxon>Murinae</taxon>
        <taxon>Mus</taxon>
        <taxon>Mus</taxon>
    </lineage>
</organism>
<name>CLTR2_MOUSE</name>
<dbReference type="EMBL" id="AF331658">
    <property type="protein sequence ID" value="AAK97354.1"/>
    <property type="molecule type" value="mRNA"/>
</dbReference>
<dbReference type="EMBL" id="CH466535">
    <property type="protein sequence ID" value="EDL35864.1"/>
    <property type="molecule type" value="Genomic_DNA"/>
</dbReference>
<dbReference type="EMBL" id="CH466535">
    <property type="protein sequence ID" value="EDL35865.1"/>
    <property type="molecule type" value="Genomic_DNA"/>
</dbReference>
<dbReference type="EMBL" id="BC132414">
    <property type="protein sequence ID" value="AAI32415.1"/>
    <property type="molecule type" value="mRNA"/>
</dbReference>
<dbReference type="EMBL" id="BC132418">
    <property type="protein sequence ID" value="AAI32419.1"/>
    <property type="molecule type" value="mRNA"/>
</dbReference>
<dbReference type="CCDS" id="CCDS27265.1"/>
<dbReference type="RefSeq" id="NP_001155884.1">
    <property type="nucleotide sequence ID" value="NM_001162412.2"/>
</dbReference>
<dbReference type="RefSeq" id="NP_598481.2">
    <property type="nucleotide sequence ID" value="NM_133720.4"/>
</dbReference>
<dbReference type="RefSeq" id="XP_011243480.1">
    <property type="nucleotide sequence ID" value="XM_011245178.2"/>
</dbReference>
<dbReference type="RefSeq" id="XP_030103861.1">
    <property type="nucleotide sequence ID" value="XM_030248001.2"/>
</dbReference>
<dbReference type="SMR" id="Q920A1"/>
<dbReference type="FunCoup" id="Q920A1">
    <property type="interactions" value="938"/>
</dbReference>
<dbReference type="STRING" id="10090.ENSMUSP00000040715"/>
<dbReference type="GlyCosmos" id="Q920A1">
    <property type="glycosylation" value="1 site, No reported glycans"/>
</dbReference>
<dbReference type="GlyGen" id="Q920A1">
    <property type="glycosylation" value="1 site"/>
</dbReference>
<dbReference type="PhosphoSitePlus" id="Q920A1"/>
<dbReference type="PaxDb" id="10090-ENSMUSP00000040715"/>
<dbReference type="DNASU" id="70086"/>
<dbReference type="Ensembl" id="ENSMUST00000044664.12">
    <property type="protein sequence ID" value="ENSMUSP00000040715.5"/>
    <property type="gene ID" value="ENSMUSG00000033470.13"/>
</dbReference>
<dbReference type="Ensembl" id="ENSMUST00000169168.3">
    <property type="protein sequence ID" value="ENSMUSP00000125958.2"/>
    <property type="gene ID" value="ENSMUSG00000033470.13"/>
</dbReference>
<dbReference type="GeneID" id="70086"/>
<dbReference type="KEGG" id="mmu:70086"/>
<dbReference type="UCSC" id="uc007upi.2">
    <property type="organism name" value="mouse"/>
</dbReference>
<dbReference type="AGR" id="MGI:1917336"/>
<dbReference type="CTD" id="57105"/>
<dbReference type="MGI" id="MGI:1917336">
    <property type="gene designation" value="Cysltr2"/>
</dbReference>
<dbReference type="VEuPathDB" id="HostDB:ENSMUSG00000033470"/>
<dbReference type="eggNOG" id="ENOG502RX8K">
    <property type="taxonomic scope" value="Eukaryota"/>
</dbReference>
<dbReference type="GeneTree" id="ENSGT00990000203527"/>
<dbReference type="HOGENOM" id="CLU_009579_8_2_1"/>
<dbReference type="InParanoid" id="Q920A1"/>
<dbReference type="OMA" id="FCTIIVC"/>
<dbReference type="OrthoDB" id="9990906at2759"/>
<dbReference type="PhylomeDB" id="Q920A1"/>
<dbReference type="TreeFam" id="TF350009"/>
<dbReference type="Reactome" id="R-MMU-391906">
    <property type="pathway name" value="Leukotriene receptors"/>
</dbReference>
<dbReference type="Reactome" id="R-MMU-416476">
    <property type="pathway name" value="G alpha (q) signalling events"/>
</dbReference>
<dbReference type="BioGRID-ORCS" id="70086">
    <property type="hits" value="1 hit in 78 CRISPR screens"/>
</dbReference>
<dbReference type="PRO" id="PR:Q920A1"/>
<dbReference type="Proteomes" id="UP000000589">
    <property type="component" value="Chromosome 14"/>
</dbReference>
<dbReference type="RNAct" id="Q920A1">
    <property type="molecule type" value="protein"/>
</dbReference>
<dbReference type="Bgee" id="ENSMUSG00000033470">
    <property type="expression patterns" value="Expressed in secondary oocyte and 47 other cell types or tissues"/>
</dbReference>
<dbReference type="GO" id="GO:0016020">
    <property type="term" value="C:membrane"/>
    <property type="evidence" value="ECO:0000314"/>
    <property type="project" value="MGI"/>
</dbReference>
<dbReference type="GO" id="GO:0005886">
    <property type="term" value="C:plasma membrane"/>
    <property type="evidence" value="ECO:0007669"/>
    <property type="project" value="UniProtKB-SubCell"/>
</dbReference>
<dbReference type="GO" id="GO:0001631">
    <property type="term" value="F:cysteinyl leukotriene receptor activity"/>
    <property type="evidence" value="ECO:0000314"/>
    <property type="project" value="MGI"/>
</dbReference>
<dbReference type="FunFam" id="1.20.1070.10:FF:000017">
    <property type="entry name" value="lysophosphatidic acid receptor 4"/>
    <property type="match status" value="1"/>
</dbReference>
<dbReference type="Gene3D" id="1.20.1070.10">
    <property type="entry name" value="Rhodopsin 7-helix transmembrane proteins"/>
    <property type="match status" value="1"/>
</dbReference>
<dbReference type="InterPro" id="IPR013311">
    <property type="entry name" value="CLT2_recept"/>
</dbReference>
<dbReference type="InterPro" id="IPR004071">
    <property type="entry name" value="Cyst_leuk_rcpt"/>
</dbReference>
<dbReference type="InterPro" id="IPR000276">
    <property type="entry name" value="GPCR_Rhodpsn"/>
</dbReference>
<dbReference type="InterPro" id="IPR017452">
    <property type="entry name" value="GPCR_Rhodpsn_7TM"/>
</dbReference>
<dbReference type="PANTHER" id="PTHR24231:SF48">
    <property type="entry name" value="G-PROTEIN COUPLED RECEPTORS FAMILY 1 PROFILE DOMAIN-CONTAINING PROTEIN"/>
    <property type="match status" value="1"/>
</dbReference>
<dbReference type="PANTHER" id="PTHR24231">
    <property type="entry name" value="PURINOCEPTOR-RELATED G-PROTEIN COUPLED RECEPTOR"/>
    <property type="match status" value="1"/>
</dbReference>
<dbReference type="Pfam" id="PF00001">
    <property type="entry name" value="7tm_1"/>
    <property type="match status" value="1"/>
</dbReference>
<dbReference type="PRINTS" id="PR01903">
    <property type="entry name" value="CYSLT2RECPTR"/>
</dbReference>
<dbReference type="PRINTS" id="PR01533">
    <property type="entry name" value="CYSLTRECPTR"/>
</dbReference>
<dbReference type="PRINTS" id="PR00237">
    <property type="entry name" value="GPCRRHODOPSN"/>
</dbReference>
<dbReference type="SUPFAM" id="SSF81321">
    <property type="entry name" value="Family A G protein-coupled receptor-like"/>
    <property type="match status" value="1"/>
</dbReference>
<dbReference type="PROSITE" id="PS50262">
    <property type="entry name" value="G_PROTEIN_RECEP_F1_2"/>
    <property type="match status" value="1"/>
</dbReference>
<comment type="function">
    <text>Receptor for cysteinyl leukotrienes. The response is mediated via a G-protein that activates a phosphatidylinositol-calcium second messenger system. The rank order of affinities for the leukotrienes is LTC4 = LTD4 &gt;&gt; LTE4.</text>
</comment>
<comment type="subcellular location">
    <subcellularLocation>
        <location>Cell membrane</location>
        <topology>Multi-pass membrane protein</topology>
    </subcellularLocation>
</comment>
<comment type="tissue specificity">
    <text>Widely expressed at low levels, with highest expression in the spleen, thymus and adrenal gland, and lower in the kidney, brain and peripheral blood leukocytes.</text>
</comment>
<comment type="similarity">
    <text evidence="2">Belongs to the G-protein coupled receptor 1 family.</text>
</comment>
<reference key="1">
    <citation type="journal article" date="2001" name="J. Biol. Chem.">
        <title>The murine cysteinyl leukotriene 2 (CysLT2) receptor. cDNA and genomic cloning, alternative splicing, and in vitro characterization.</title>
        <authorList>
            <person name="Hui Y."/>
            <person name="Yang G."/>
            <person name="Galczenski H."/>
            <person name="Figueroa D.J."/>
            <person name="Austin C.P."/>
            <person name="Copeland N.G."/>
            <person name="Gilbert D.J."/>
            <person name="Jenkins N.A."/>
            <person name="Funk C.D."/>
        </authorList>
    </citation>
    <scope>NUCLEOTIDE SEQUENCE [MRNA]</scope>
    <source>
        <tissue>Heart</tissue>
    </source>
</reference>
<reference key="2">
    <citation type="submission" date="2005-09" db="EMBL/GenBank/DDBJ databases">
        <authorList>
            <person name="Mural R.J."/>
            <person name="Adams M.D."/>
            <person name="Myers E.W."/>
            <person name="Smith H.O."/>
            <person name="Venter J.C."/>
        </authorList>
    </citation>
    <scope>NUCLEOTIDE SEQUENCE [LARGE SCALE GENOMIC DNA]</scope>
</reference>
<reference key="3">
    <citation type="journal article" date="2004" name="Genome Res.">
        <title>The status, quality, and expansion of the NIH full-length cDNA project: the Mammalian Gene Collection (MGC).</title>
        <authorList>
            <consortium name="The MGC Project Team"/>
        </authorList>
    </citation>
    <scope>NUCLEOTIDE SEQUENCE [LARGE SCALE MRNA]</scope>
    <source>
        <tissue>Lung</tissue>
    </source>
</reference>
<evidence type="ECO:0000255" key="1"/>
<evidence type="ECO:0000255" key="2">
    <source>
        <dbReference type="PROSITE-ProRule" id="PRU00521"/>
    </source>
</evidence>
<evidence type="ECO:0000305" key="3"/>
<keyword id="KW-1003">Cell membrane</keyword>
<keyword id="KW-1015">Disulfide bond</keyword>
<keyword id="KW-0297">G-protein coupled receptor</keyword>
<keyword id="KW-0325">Glycoprotein</keyword>
<keyword id="KW-0472">Membrane</keyword>
<keyword id="KW-0675">Receptor</keyword>
<keyword id="KW-1185">Reference proteome</keyword>
<keyword id="KW-0807">Transducer</keyword>
<keyword id="KW-0812">Transmembrane</keyword>
<keyword id="KW-1133">Transmembrane helix</keyword>